<feature type="chain" id="PRO_0000290882" description="Small ribosomal subunit protein uS8">
    <location>
        <begin position="1"/>
        <end position="132"/>
    </location>
</feature>
<dbReference type="EMBL" id="CP000384">
    <property type="protein sequence ID" value="ABG07143.1"/>
    <property type="molecule type" value="Genomic_DNA"/>
</dbReference>
<dbReference type="SMR" id="Q1BD91"/>
<dbReference type="KEGG" id="mmc:Mmcs_1029"/>
<dbReference type="HOGENOM" id="CLU_098428_0_1_11"/>
<dbReference type="BioCyc" id="MSP164756:G1G6O-1053-MONOMER"/>
<dbReference type="GO" id="GO:1990904">
    <property type="term" value="C:ribonucleoprotein complex"/>
    <property type="evidence" value="ECO:0007669"/>
    <property type="project" value="UniProtKB-KW"/>
</dbReference>
<dbReference type="GO" id="GO:0005840">
    <property type="term" value="C:ribosome"/>
    <property type="evidence" value="ECO:0007669"/>
    <property type="project" value="UniProtKB-KW"/>
</dbReference>
<dbReference type="GO" id="GO:0019843">
    <property type="term" value="F:rRNA binding"/>
    <property type="evidence" value="ECO:0007669"/>
    <property type="project" value="UniProtKB-UniRule"/>
</dbReference>
<dbReference type="GO" id="GO:0003735">
    <property type="term" value="F:structural constituent of ribosome"/>
    <property type="evidence" value="ECO:0007669"/>
    <property type="project" value="InterPro"/>
</dbReference>
<dbReference type="GO" id="GO:0006412">
    <property type="term" value="P:translation"/>
    <property type="evidence" value="ECO:0007669"/>
    <property type="project" value="UniProtKB-UniRule"/>
</dbReference>
<dbReference type="FunFam" id="3.30.1370.30:FF:000002">
    <property type="entry name" value="30S ribosomal protein S8"/>
    <property type="match status" value="1"/>
</dbReference>
<dbReference type="FunFam" id="3.30.1490.10:FF:000001">
    <property type="entry name" value="30S ribosomal protein S8"/>
    <property type="match status" value="1"/>
</dbReference>
<dbReference type="Gene3D" id="3.30.1370.30">
    <property type="match status" value="1"/>
</dbReference>
<dbReference type="Gene3D" id="3.30.1490.10">
    <property type="match status" value="1"/>
</dbReference>
<dbReference type="HAMAP" id="MF_01302_B">
    <property type="entry name" value="Ribosomal_uS8_B"/>
    <property type="match status" value="1"/>
</dbReference>
<dbReference type="InterPro" id="IPR000630">
    <property type="entry name" value="Ribosomal_uS8"/>
</dbReference>
<dbReference type="InterPro" id="IPR047863">
    <property type="entry name" value="Ribosomal_uS8_CS"/>
</dbReference>
<dbReference type="InterPro" id="IPR035987">
    <property type="entry name" value="Ribosomal_uS8_sf"/>
</dbReference>
<dbReference type="NCBIfam" id="NF001109">
    <property type="entry name" value="PRK00136.1"/>
    <property type="match status" value="1"/>
</dbReference>
<dbReference type="PANTHER" id="PTHR11758">
    <property type="entry name" value="40S RIBOSOMAL PROTEIN S15A"/>
    <property type="match status" value="1"/>
</dbReference>
<dbReference type="Pfam" id="PF00410">
    <property type="entry name" value="Ribosomal_S8"/>
    <property type="match status" value="1"/>
</dbReference>
<dbReference type="SUPFAM" id="SSF56047">
    <property type="entry name" value="Ribosomal protein S8"/>
    <property type="match status" value="1"/>
</dbReference>
<dbReference type="PROSITE" id="PS00053">
    <property type="entry name" value="RIBOSOMAL_S8"/>
    <property type="match status" value="1"/>
</dbReference>
<organism>
    <name type="scientific">Mycobacterium sp. (strain MCS)</name>
    <dbReference type="NCBI Taxonomy" id="164756"/>
    <lineage>
        <taxon>Bacteria</taxon>
        <taxon>Bacillati</taxon>
        <taxon>Actinomycetota</taxon>
        <taxon>Actinomycetes</taxon>
        <taxon>Mycobacteriales</taxon>
        <taxon>Mycobacteriaceae</taxon>
        <taxon>Mycobacterium</taxon>
    </lineage>
</organism>
<proteinExistence type="inferred from homology"/>
<comment type="function">
    <text evidence="1">One of the primary rRNA binding proteins, it binds directly to 16S rRNA central domain where it helps coordinate assembly of the platform of the 30S subunit.</text>
</comment>
<comment type="subunit">
    <text evidence="1">Part of the 30S ribosomal subunit. Contacts proteins S5 and S12.</text>
</comment>
<comment type="similarity">
    <text evidence="1">Belongs to the universal ribosomal protein uS8 family.</text>
</comment>
<evidence type="ECO:0000255" key="1">
    <source>
        <dbReference type="HAMAP-Rule" id="MF_01302"/>
    </source>
</evidence>
<evidence type="ECO:0000305" key="2"/>
<gene>
    <name evidence="1" type="primary">rpsH</name>
    <name type="ordered locus">Mmcs_1029</name>
</gene>
<sequence>MTMTDPIADFLTRLRNANSAYHDEVTLPHSKIKANIAEILKSEGYISDYRTEDARVGKSLVVQLKYGPSRERSIAGLRRVSKPGLRVYAKSTNLPRVLGGLGVAIISTSSGLLTDRQAARSGVGGEVLAYVW</sequence>
<keyword id="KW-0687">Ribonucleoprotein</keyword>
<keyword id="KW-0689">Ribosomal protein</keyword>
<keyword id="KW-0694">RNA-binding</keyword>
<keyword id="KW-0699">rRNA-binding</keyword>
<reference key="1">
    <citation type="submission" date="2006-06" db="EMBL/GenBank/DDBJ databases">
        <title>Complete sequence of chromosome of Mycobacterium sp. MCS.</title>
        <authorList>
            <consortium name="US DOE Joint Genome Institute"/>
            <person name="Copeland A."/>
            <person name="Lucas S."/>
            <person name="Lapidus A."/>
            <person name="Barry K."/>
            <person name="Detter J.C."/>
            <person name="Glavina del Rio T."/>
            <person name="Hammon N."/>
            <person name="Israni S."/>
            <person name="Dalin E."/>
            <person name="Tice H."/>
            <person name="Pitluck S."/>
            <person name="Martinez M."/>
            <person name="Schmutz J."/>
            <person name="Larimer F."/>
            <person name="Land M."/>
            <person name="Hauser L."/>
            <person name="Kyrpides N."/>
            <person name="Kim E."/>
            <person name="Miller C.D."/>
            <person name="Hughes J.E."/>
            <person name="Anderson A.J."/>
            <person name="Sims R.C."/>
            <person name="Richardson P."/>
        </authorList>
    </citation>
    <scope>NUCLEOTIDE SEQUENCE [LARGE SCALE GENOMIC DNA]</scope>
    <source>
        <strain>MCS</strain>
    </source>
</reference>
<accession>Q1BD91</accession>
<protein>
    <recommendedName>
        <fullName evidence="1">Small ribosomal subunit protein uS8</fullName>
    </recommendedName>
    <alternativeName>
        <fullName evidence="2">30S ribosomal protein S8</fullName>
    </alternativeName>
</protein>
<name>RS8_MYCSS</name>